<evidence type="ECO:0000255" key="1"/>
<evidence type="ECO:0000269" key="2">
    <source>
    </source>
</evidence>
<evidence type="ECO:0000305" key="3"/>
<reference key="1">
    <citation type="journal article" date="2006" name="Plant J.">
        <title>Rice plants take up iron as an Fe3+-phytosiderophore and as Fe2+.</title>
        <authorList>
            <person name="Ishimaru Y."/>
            <person name="Suzuki M."/>
            <person name="Tsukamoto T."/>
            <person name="Suzuki K."/>
            <person name="Nakazono M."/>
            <person name="Kobayashi T."/>
            <person name="Wada Y."/>
            <person name="Watanabe S."/>
            <person name="Matsuhashi S."/>
            <person name="Takahashi M."/>
            <person name="Nakanishi H."/>
            <person name="Mori S."/>
            <person name="Nishizawa N.K."/>
        </authorList>
    </citation>
    <scope>FUNCTION</scope>
    <scope>NUCLEOTIDE SEQUENCE [MRNA]</scope>
    <scope>SUBCELLULAR LOCATION</scope>
    <scope>INDUCTION</scope>
</reference>
<reference key="2">
    <citation type="journal article" date="2005" name="Genome Res.">
        <title>Sequence, annotation, and analysis of synteny between rice chromosome 3 and diverged grass species.</title>
        <authorList>
            <consortium name="The rice chromosome 3 sequencing consortium"/>
            <person name="Buell C.R."/>
            <person name="Yuan Q."/>
            <person name="Ouyang S."/>
            <person name="Liu J."/>
            <person name="Zhu W."/>
            <person name="Wang A."/>
            <person name="Maiti R."/>
            <person name="Haas B."/>
            <person name="Wortman J."/>
            <person name="Pertea M."/>
            <person name="Jones K.M."/>
            <person name="Kim M."/>
            <person name="Overton L."/>
            <person name="Tsitrin T."/>
            <person name="Fadrosh D."/>
            <person name="Bera J."/>
            <person name="Weaver B."/>
            <person name="Jin S."/>
            <person name="Johri S."/>
            <person name="Reardon M."/>
            <person name="Webb K."/>
            <person name="Hill J."/>
            <person name="Moffat K."/>
            <person name="Tallon L."/>
            <person name="Van Aken S."/>
            <person name="Lewis M."/>
            <person name="Utterback T."/>
            <person name="Feldblyum T."/>
            <person name="Zismann V."/>
            <person name="Iobst S."/>
            <person name="Hsiao J."/>
            <person name="de Vazeille A.R."/>
            <person name="Salzberg S.L."/>
            <person name="White O."/>
            <person name="Fraser C.M."/>
            <person name="Yu Y."/>
            <person name="Kim H."/>
            <person name="Rambo T."/>
            <person name="Currie J."/>
            <person name="Collura K."/>
            <person name="Kernodle-Thompson S."/>
            <person name="Wei F."/>
            <person name="Kudrna K."/>
            <person name="Ammiraju J.S.S."/>
            <person name="Luo M."/>
            <person name="Goicoechea J.L."/>
            <person name="Wing R.A."/>
            <person name="Henry D."/>
            <person name="Oates R."/>
            <person name="Palmer M."/>
            <person name="Pries G."/>
            <person name="Saski C."/>
            <person name="Simmons J."/>
            <person name="Soderlund C."/>
            <person name="Nelson W."/>
            <person name="de la Bastide M."/>
            <person name="Spiegel L."/>
            <person name="Nascimento L."/>
            <person name="Huang E."/>
            <person name="Preston R."/>
            <person name="Zutavern T."/>
            <person name="Palmer L."/>
            <person name="O'Shaughnessy A."/>
            <person name="Dike S."/>
            <person name="McCombie W.R."/>
            <person name="Minx P."/>
            <person name="Cordum H."/>
            <person name="Wilson R."/>
            <person name="Jin W."/>
            <person name="Lee H.R."/>
            <person name="Jiang J."/>
            <person name="Jackson S."/>
        </authorList>
    </citation>
    <scope>NUCLEOTIDE SEQUENCE [LARGE SCALE GENOMIC DNA]</scope>
    <source>
        <strain>cv. Nipponbare</strain>
    </source>
</reference>
<reference key="3">
    <citation type="journal article" date="2005" name="Nature">
        <title>The map-based sequence of the rice genome.</title>
        <authorList>
            <consortium name="International rice genome sequencing project (IRGSP)"/>
        </authorList>
    </citation>
    <scope>NUCLEOTIDE SEQUENCE [LARGE SCALE GENOMIC DNA]</scope>
    <source>
        <strain>cv. Nipponbare</strain>
    </source>
</reference>
<reference key="4">
    <citation type="journal article" date="2008" name="Nucleic Acids Res.">
        <title>The rice annotation project database (RAP-DB): 2008 update.</title>
        <authorList>
            <consortium name="The rice annotation project (RAP)"/>
        </authorList>
    </citation>
    <scope>GENOME REANNOTATION</scope>
    <source>
        <strain>cv. Nipponbare</strain>
    </source>
</reference>
<reference key="5">
    <citation type="journal article" date="2013" name="Rice">
        <title>Improvement of the Oryza sativa Nipponbare reference genome using next generation sequence and optical map data.</title>
        <authorList>
            <person name="Kawahara Y."/>
            <person name="de la Bastide M."/>
            <person name="Hamilton J.P."/>
            <person name="Kanamori H."/>
            <person name="McCombie W.R."/>
            <person name="Ouyang S."/>
            <person name="Schwartz D.C."/>
            <person name="Tanaka T."/>
            <person name="Wu J."/>
            <person name="Zhou S."/>
            <person name="Childs K.L."/>
            <person name="Davidson R.M."/>
            <person name="Lin H."/>
            <person name="Quesada-Ocampo L."/>
            <person name="Vaillancourt B."/>
            <person name="Sakai H."/>
            <person name="Lee S.S."/>
            <person name="Kim J."/>
            <person name="Numa H."/>
            <person name="Itoh T."/>
            <person name="Buell C.R."/>
            <person name="Matsumoto T."/>
        </authorList>
    </citation>
    <scope>GENOME REANNOTATION</scope>
    <source>
        <strain>cv. Nipponbare</strain>
    </source>
</reference>
<reference key="6">
    <citation type="journal article" date="2005" name="PLoS Biol.">
        <title>The genomes of Oryza sativa: a history of duplications.</title>
        <authorList>
            <person name="Yu J."/>
            <person name="Wang J."/>
            <person name="Lin W."/>
            <person name="Li S."/>
            <person name="Li H."/>
            <person name="Zhou J."/>
            <person name="Ni P."/>
            <person name="Dong W."/>
            <person name="Hu S."/>
            <person name="Zeng C."/>
            <person name="Zhang J."/>
            <person name="Zhang Y."/>
            <person name="Li R."/>
            <person name="Xu Z."/>
            <person name="Li S."/>
            <person name="Li X."/>
            <person name="Zheng H."/>
            <person name="Cong L."/>
            <person name="Lin L."/>
            <person name="Yin J."/>
            <person name="Geng J."/>
            <person name="Li G."/>
            <person name="Shi J."/>
            <person name="Liu J."/>
            <person name="Lv H."/>
            <person name="Li J."/>
            <person name="Wang J."/>
            <person name="Deng Y."/>
            <person name="Ran L."/>
            <person name="Shi X."/>
            <person name="Wang X."/>
            <person name="Wu Q."/>
            <person name="Li C."/>
            <person name="Ren X."/>
            <person name="Wang J."/>
            <person name="Wang X."/>
            <person name="Li D."/>
            <person name="Liu D."/>
            <person name="Zhang X."/>
            <person name="Ji Z."/>
            <person name="Zhao W."/>
            <person name="Sun Y."/>
            <person name="Zhang Z."/>
            <person name="Bao J."/>
            <person name="Han Y."/>
            <person name="Dong L."/>
            <person name="Ji J."/>
            <person name="Chen P."/>
            <person name="Wu S."/>
            <person name="Liu J."/>
            <person name="Xiao Y."/>
            <person name="Bu D."/>
            <person name="Tan J."/>
            <person name="Yang L."/>
            <person name="Ye C."/>
            <person name="Zhang J."/>
            <person name="Xu J."/>
            <person name="Zhou Y."/>
            <person name="Yu Y."/>
            <person name="Zhang B."/>
            <person name="Zhuang S."/>
            <person name="Wei H."/>
            <person name="Liu B."/>
            <person name="Lei M."/>
            <person name="Yu H."/>
            <person name="Li Y."/>
            <person name="Xu H."/>
            <person name="Wei S."/>
            <person name="He X."/>
            <person name="Fang L."/>
            <person name="Zhang Z."/>
            <person name="Zhang Y."/>
            <person name="Huang X."/>
            <person name="Su Z."/>
            <person name="Tong W."/>
            <person name="Li J."/>
            <person name="Tong Z."/>
            <person name="Li S."/>
            <person name="Ye J."/>
            <person name="Wang L."/>
            <person name="Fang L."/>
            <person name="Lei T."/>
            <person name="Chen C.-S."/>
            <person name="Chen H.-C."/>
            <person name="Xu Z."/>
            <person name="Li H."/>
            <person name="Huang H."/>
            <person name="Zhang F."/>
            <person name="Xu H."/>
            <person name="Li N."/>
            <person name="Zhao C."/>
            <person name="Li S."/>
            <person name="Dong L."/>
            <person name="Huang Y."/>
            <person name="Li L."/>
            <person name="Xi Y."/>
            <person name="Qi Q."/>
            <person name="Li W."/>
            <person name="Zhang B."/>
            <person name="Hu W."/>
            <person name="Zhang Y."/>
            <person name="Tian X."/>
            <person name="Jiao Y."/>
            <person name="Liang X."/>
            <person name="Jin J."/>
            <person name="Gao L."/>
            <person name="Zheng W."/>
            <person name="Hao B."/>
            <person name="Liu S.-M."/>
            <person name="Wang W."/>
            <person name="Yuan L."/>
            <person name="Cao M."/>
            <person name="McDermott J."/>
            <person name="Samudrala R."/>
            <person name="Wang J."/>
            <person name="Wong G.K.-S."/>
            <person name="Yang H."/>
        </authorList>
    </citation>
    <scope>NUCLEOTIDE SEQUENCE [LARGE SCALE GENOMIC DNA]</scope>
    <source>
        <strain>cv. Nipponbare</strain>
    </source>
</reference>
<name>IRT2_ORYSJ</name>
<accession>Q6L8G1</accession>
<accession>A0A0P0W188</accession>
<accession>Q10FH8</accession>
<accession>Q60DL6</accession>
<comment type="function">
    <text evidence="2">Iron transporter that may play a role in the uptake of iron from the rhizosphere across the plasma membrane in the root epidermal layer.</text>
</comment>
<comment type="subcellular location">
    <subcellularLocation>
        <location evidence="2">Cell membrane</location>
        <topology evidence="2">Multi-pass membrane protein</topology>
    </subcellularLocation>
</comment>
<comment type="induction">
    <text evidence="2">By iron deficiency in roots.</text>
</comment>
<comment type="similarity">
    <text evidence="3">Belongs to the ZIP transporter (TC 2.A.5) family.</text>
</comment>
<comment type="sequence caution" evidence="3">
    <conflict type="erroneous initiation">
        <sequence resource="EMBL-CDS" id="AAU89149"/>
    </conflict>
    <text>Truncated N-terminus.</text>
</comment>
<comment type="sequence caution" evidence="3">
    <conflict type="erroneous initiation">
        <sequence resource="EMBL-CDS" id="ABF98082"/>
    </conflict>
    <text>Truncated N-terminus.</text>
</comment>
<organism>
    <name type="scientific">Oryza sativa subsp. japonica</name>
    <name type="common">Rice</name>
    <dbReference type="NCBI Taxonomy" id="39947"/>
    <lineage>
        <taxon>Eukaryota</taxon>
        <taxon>Viridiplantae</taxon>
        <taxon>Streptophyta</taxon>
        <taxon>Embryophyta</taxon>
        <taxon>Tracheophyta</taxon>
        <taxon>Spermatophyta</taxon>
        <taxon>Magnoliopsida</taxon>
        <taxon>Liliopsida</taxon>
        <taxon>Poales</taxon>
        <taxon>Poaceae</taxon>
        <taxon>BOP clade</taxon>
        <taxon>Oryzoideae</taxon>
        <taxon>Oryzeae</taxon>
        <taxon>Oryzinae</taxon>
        <taxon>Oryza</taxon>
        <taxon>Oryza sativa</taxon>
    </lineage>
</organism>
<protein>
    <recommendedName>
        <fullName>Fe(2+) transport protein 2</fullName>
    </recommendedName>
    <alternativeName>
        <fullName>Fe(II) transport protein 2</fullName>
    </alternativeName>
    <alternativeName>
        <fullName>Iron-regulated transporter 2</fullName>
        <shortName>OsIRT2</shortName>
    </alternativeName>
</protein>
<keyword id="KW-1003">Cell membrane</keyword>
<keyword id="KW-0406">Ion transport</keyword>
<keyword id="KW-0408">Iron</keyword>
<keyword id="KW-0410">Iron transport</keyword>
<keyword id="KW-0472">Membrane</keyword>
<keyword id="KW-1185">Reference proteome</keyword>
<keyword id="KW-0732">Signal</keyword>
<keyword id="KW-0812">Transmembrane</keyword>
<keyword id="KW-1133">Transmembrane helix</keyword>
<keyword id="KW-0813">Transport</keyword>
<sequence>MMMSSSQTPVRIAFVFLVILAATDAHSDHRTPPPACGGAAVGGECHSVARALRLKLIAIPAILAASVAGVCLPLFARSVPALRPDGGLFAVVKAFASGVILGTGYMHVLPDSFNDLTSPCLPRKPWSEFPFAAFVAMLAAVFTLMVDSLMLTFHTRGSKGRASSAVAHHGDHGHCHAHALGQADVAALSTTEAADQGSGDVEAGNTTKAQLLRNRVIVQVLEMGIVVHSVVIGLGMGASQNVCTIRPLVAALCFHQMFEGMGLGGCILQAGYGGRTRSALVFFFSTTTPFGIALGLALTRVYSDSSPTALVVVGLLNAASAGLLHYMALVELLAADFMGPKLQGNVRLQLAASLAILLGAGGMSVMAKWA</sequence>
<gene>
    <name type="primary">IRT2</name>
    <name type="ordered locus">Os03g0667300</name>
    <name type="ordered locus">LOC_Os03g46454</name>
    <name type="ORF">OsJ_12018</name>
    <name type="ORF">OSJNBb0036M02.15</name>
</gene>
<proteinExistence type="evidence at transcript level"/>
<dbReference type="EMBL" id="AB126086">
    <property type="protein sequence ID" value="BAD18964.1"/>
    <property type="molecule type" value="mRNA"/>
</dbReference>
<dbReference type="EMBL" id="AC145388">
    <property type="protein sequence ID" value="AAU89149.1"/>
    <property type="status" value="ALT_INIT"/>
    <property type="molecule type" value="Genomic_DNA"/>
</dbReference>
<dbReference type="EMBL" id="DP000009">
    <property type="protein sequence ID" value="ABF98082.1"/>
    <property type="status" value="ALT_INIT"/>
    <property type="molecule type" value="Genomic_DNA"/>
</dbReference>
<dbReference type="EMBL" id="AP008209">
    <property type="protein sequence ID" value="BAF12765.2"/>
    <property type="molecule type" value="Genomic_DNA"/>
</dbReference>
<dbReference type="EMBL" id="AP014959">
    <property type="protein sequence ID" value="BAS85652.1"/>
    <property type="molecule type" value="Genomic_DNA"/>
</dbReference>
<dbReference type="EMBL" id="CM000140">
    <property type="protein sequence ID" value="EEE59644.1"/>
    <property type="molecule type" value="Genomic_DNA"/>
</dbReference>
<dbReference type="RefSeq" id="XP_015629246.1">
    <property type="nucleotide sequence ID" value="XM_015773760.1"/>
</dbReference>
<dbReference type="FunCoup" id="Q6L8G1">
    <property type="interactions" value="1730"/>
</dbReference>
<dbReference type="STRING" id="39947.Q6L8G1"/>
<dbReference type="PaxDb" id="39947-Q6L8G1"/>
<dbReference type="EnsemblPlants" id="Os03t0667300-01">
    <property type="protein sequence ID" value="Os03t0667300-01"/>
    <property type="gene ID" value="Os03g0667300"/>
</dbReference>
<dbReference type="Gramene" id="Os03t0667300-01">
    <property type="protein sequence ID" value="Os03t0667300-01"/>
    <property type="gene ID" value="Os03g0667300"/>
</dbReference>
<dbReference type="KEGG" id="dosa:Os03g0667300"/>
<dbReference type="eggNOG" id="KOG1558">
    <property type="taxonomic scope" value="Eukaryota"/>
</dbReference>
<dbReference type="HOGENOM" id="CLU_027089_3_0_1"/>
<dbReference type="InParanoid" id="Q6L8G1"/>
<dbReference type="OMA" id="MHREENA"/>
<dbReference type="OrthoDB" id="448280at2759"/>
<dbReference type="PlantReactome" id="R-OSA-9025727">
    <property type="pathway name" value="Iron uptake and transport in root vascular system"/>
</dbReference>
<dbReference type="Proteomes" id="UP000000763">
    <property type="component" value="Chromosome 3"/>
</dbReference>
<dbReference type="Proteomes" id="UP000007752">
    <property type="component" value="Chromosome 3"/>
</dbReference>
<dbReference type="Proteomes" id="UP000059680">
    <property type="component" value="Chromosome 3"/>
</dbReference>
<dbReference type="GO" id="GO:0005886">
    <property type="term" value="C:plasma membrane"/>
    <property type="evidence" value="ECO:0000314"/>
    <property type="project" value="UniProtKB"/>
</dbReference>
<dbReference type="GO" id="GO:0005385">
    <property type="term" value="F:zinc ion transmembrane transporter activity"/>
    <property type="evidence" value="ECO:0000318"/>
    <property type="project" value="GO_Central"/>
</dbReference>
<dbReference type="GO" id="GO:0006826">
    <property type="term" value="P:iron ion transport"/>
    <property type="evidence" value="ECO:0000316"/>
    <property type="project" value="UniProtKB"/>
</dbReference>
<dbReference type="GO" id="GO:0071577">
    <property type="term" value="P:zinc ion transmembrane transport"/>
    <property type="evidence" value="ECO:0000318"/>
    <property type="project" value="GO_Central"/>
</dbReference>
<dbReference type="InterPro" id="IPR003689">
    <property type="entry name" value="ZIP"/>
</dbReference>
<dbReference type="InterPro" id="IPR004698">
    <property type="entry name" value="Zn/Fe_permease_fun/pln"/>
</dbReference>
<dbReference type="NCBIfam" id="TIGR00820">
    <property type="entry name" value="zip"/>
    <property type="match status" value="1"/>
</dbReference>
<dbReference type="PANTHER" id="PTHR11040:SF41">
    <property type="entry name" value="ZINC TRANSPORTER 7"/>
    <property type="match status" value="1"/>
</dbReference>
<dbReference type="PANTHER" id="PTHR11040">
    <property type="entry name" value="ZINC/IRON TRANSPORTER"/>
    <property type="match status" value="1"/>
</dbReference>
<dbReference type="Pfam" id="PF02535">
    <property type="entry name" value="Zip"/>
    <property type="match status" value="1"/>
</dbReference>
<feature type="signal peptide" evidence="1">
    <location>
        <begin position="1"/>
        <end position="25"/>
    </location>
</feature>
<feature type="chain" id="PRO_0000398324" description="Fe(2+) transport protein 2">
    <location>
        <begin position="26"/>
        <end position="370"/>
    </location>
</feature>
<feature type="topological domain" description="Extracellular" evidence="1">
    <location>
        <begin position="26"/>
        <end position="55"/>
    </location>
</feature>
<feature type="transmembrane region" description="Helical" evidence="1">
    <location>
        <begin position="56"/>
        <end position="76"/>
    </location>
</feature>
<feature type="topological domain" description="Cytoplasmic" evidence="1">
    <location>
        <begin position="77"/>
        <end position="85"/>
    </location>
</feature>
<feature type="transmembrane region" description="Helical" evidence="1">
    <location>
        <begin position="86"/>
        <end position="106"/>
    </location>
</feature>
<feature type="topological domain" description="Extracellular" evidence="1">
    <location>
        <begin position="107"/>
        <end position="130"/>
    </location>
</feature>
<feature type="transmembrane region" description="Helical" evidence="1">
    <location>
        <begin position="131"/>
        <end position="151"/>
    </location>
</feature>
<feature type="topological domain" description="Cytoplasmic" evidence="1">
    <location>
        <begin position="152"/>
        <end position="215"/>
    </location>
</feature>
<feature type="transmembrane region" description="Helical" evidence="1">
    <location>
        <begin position="216"/>
        <end position="236"/>
    </location>
</feature>
<feature type="topological domain" description="Extracellular" evidence="1">
    <location>
        <begin position="237"/>
        <end position="247"/>
    </location>
</feature>
<feature type="transmembrane region" description="Helical" evidence="1">
    <location>
        <begin position="248"/>
        <end position="268"/>
    </location>
</feature>
<feature type="topological domain" description="Cytoplasmic" evidence="1">
    <location>
        <begin position="269"/>
        <end position="278"/>
    </location>
</feature>
<feature type="transmembrane region" description="Helical" evidence="1">
    <location>
        <begin position="279"/>
        <end position="299"/>
    </location>
</feature>
<feature type="topological domain" description="Extracellular" evidence="1">
    <location>
        <begin position="300"/>
        <end position="309"/>
    </location>
</feature>
<feature type="transmembrane region" description="Helical" evidence="1">
    <location>
        <begin position="310"/>
        <end position="330"/>
    </location>
</feature>
<feature type="topological domain" description="Cytoplasmic" evidence="1">
    <location>
        <begin position="331"/>
        <end position="349"/>
    </location>
</feature>
<feature type="transmembrane region" description="Helical" evidence="1">
    <location>
        <begin position="350"/>
        <end position="370"/>
    </location>
</feature>